<dbReference type="EMBL" id="AB007025">
    <property type="protein sequence ID" value="BAA25924.1"/>
    <property type="status" value="ALT_FRAME"/>
    <property type="molecule type" value="mRNA"/>
</dbReference>
<dbReference type="EMBL" id="U15926">
    <property type="protein sequence ID" value="AAG23402.1"/>
    <property type="molecule type" value="mRNA"/>
</dbReference>
<dbReference type="EMBL" id="AAFI02000063">
    <property type="protein sequence ID" value="EAL65358.1"/>
    <property type="molecule type" value="Genomic_DNA"/>
</dbReference>
<dbReference type="RefSeq" id="XP_638735.1">
    <property type="nucleotide sequence ID" value="XM_633643.1"/>
</dbReference>
<dbReference type="SMR" id="Q9GRF8"/>
<dbReference type="FunCoup" id="Q9GRF8">
    <property type="interactions" value="833"/>
</dbReference>
<dbReference type="STRING" id="44689.Q9GRF8"/>
<dbReference type="PaxDb" id="44689-DDB0191174"/>
<dbReference type="EnsemblProtists" id="EAL65358">
    <property type="protein sequence ID" value="EAL65358"/>
    <property type="gene ID" value="DDB_G0284035"/>
</dbReference>
<dbReference type="GeneID" id="8624405"/>
<dbReference type="KEGG" id="ddi:DDB_G0284035"/>
<dbReference type="dictyBase" id="DDB_G0284035">
    <property type="gene designation" value="efa1B"/>
</dbReference>
<dbReference type="VEuPathDB" id="AmoebaDB:DDB_G0284035"/>
<dbReference type="eggNOG" id="KOG1668">
    <property type="taxonomic scope" value="Eukaryota"/>
</dbReference>
<dbReference type="HOGENOM" id="CLU_050172_0_2_1"/>
<dbReference type="InParanoid" id="Q9GRF8"/>
<dbReference type="OMA" id="YRWYKHI"/>
<dbReference type="PhylomeDB" id="Q9GRF8"/>
<dbReference type="Reactome" id="R-DDI-156842">
    <property type="pathway name" value="Eukaryotic Translation Elongation"/>
</dbReference>
<dbReference type="PRO" id="PR:Q9GRF8"/>
<dbReference type="Proteomes" id="UP000002195">
    <property type="component" value="Chromosome 4"/>
</dbReference>
<dbReference type="GO" id="GO:0005938">
    <property type="term" value="C:cell cortex"/>
    <property type="evidence" value="ECO:0000314"/>
    <property type="project" value="dictyBase"/>
</dbReference>
<dbReference type="GO" id="GO:0005737">
    <property type="term" value="C:cytoplasm"/>
    <property type="evidence" value="ECO:0000314"/>
    <property type="project" value="dictyBase"/>
</dbReference>
<dbReference type="GO" id="GO:0005829">
    <property type="term" value="C:cytosol"/>
    <property type="evidence" value="ECO:0000318"/>
    <property type="project" value="GO_Central"/>
</dbReference>
<dbReference type="GO" id="GO:0005853">
    <property type="term" value="C:eukaryotic translation elongation factor 1 complex"/>
    <property type="evidence" value="ECO:0000250"/>
    <property type="project" value="dictyBase"/>
</dbReference>
<dbReference type="GO" id="GO:0045335">
    <property type="term" value="C:phagocytic vesicle"/>
    <property type="evidence" value="ECO:0007005"/>
    <property type="project" value="dictyBase"/>
</dbReference>
<dbReference type="GO" id="GO:0003785">
    <property type="term" value="F:actin monomer binding"/>
    <property type="evidence" value="ECO:0000314"/>
    <property type="project" value="dictyBase"/>
</dbReference>
<dbReference type="GO" id="GO:0005085">
    <property type="term" value="F:guanyl-nucleotide exchange factor activity"/>
    <property type="evidence" value="ECO:0000318"/>
    <property type="project" value="GO_Central"/>
</dbReference>
<dbReference type="GO" id="GO:0003746">
    <property type="term" value="F:translation elongation factor activity"/>
    <property type="evidence" value="ECO:0000250"/>
    <property type="project" value="dictyBase"/>
</dbReference>
<dbReference type="GO" id="GO:0030041">
    <property type="term" value="P:actin filament polymerization"/>
    <property type="evidence" value="ECO:0000314"/>
    <property type="project" value="dictyBase"/>
</dbReference>
<dbReference type="GO" id="GO:0009617">
    <property type="term" value="P:response to bacterium"/>
    <property type="evidence" value="ECO:0007007"/>
    <property type="project" value="dictyBase"/>
</dbReference>
<dbReference type="GO" id="GO:0006414">
    <property type="term" value="P:translational elongation"/>
    <property type="evidence" value="ECO:0000250"/>
    <property type="project" value="dictyBase"/>
</dbReference>
<dbReference type="CDD" id="cd00292">
    <property type="entry name" value="EF1B"/>
    <property type="match status" value="1"/>
</dbReference>
<dbReference type="CDD" id="cd10308">
    <property type="entry name" value="GST_C_eEF1b_like"/>
    <property type="match status" value="1"/>
</dbReference>
<dbReference type="FunFam" id="1.20.1050.130:FF:000042">
    <property type="entry name" value="Elongation factor 1-beta"/>
    <property type="match status" value="1"/>
</dbReference>
<dbReference type="FunFam" id="3.30.70.60:FF:000001">
    <property type="entry name" value="Elongation factor 1-beta 1 like"/>
    <property type="match status" value="1"/>
</dbReference>
<dbReference type="Gene3D" id="1.20.1050.130">
    <property type="match status" value="1"/>
</dbReference>
<dbReference type="Gene3D" id="3.30.70.60">
    <property type="match status" value="1"/>
</dbReference>
<dbReference type="InterPro" id="IPR036219">
    <property type="entry name" value="eEF-1beta-like_sf"/>
</dbReference>
<dbReference type="InterPro" id="IPR018940">
    <property type="entry name" value="EF-1_beta_acid_region_euk"/>
</dbReference>
<dbReference type="InterPro" id="IPR049720">
    <property type="entry name" value="EF1B_bsu/dsu"/>
</dbReference>
<dbReference type="InterPro" id="IPR014038">
    <property type="entry name" value="EF1B_bsu/dsu_GNE"/>
</dbReference>
<dbReference type="InterPro" id="IPR036282">
    <property type="entry name" value="Glutathione-S-Trfase_C_sf"/>
</dbReference>
<dbReference type="InterPro" id="IPR014717">
    <property type="entry name" value="Transl_elong_EF1B/ribsomal_bS6"/>
</dbReference>
<dbReference type="InterPro" id="IPR001326">
    <property type="entry name" value="Transl_elong_EF1B_B/D_CS"/>
</dbReference>
<dbReference type="PANTHER" id="PTHR11595">
    <property type="entry name" value="EF-HAND AND COILED-COIL DOMAIN-CONTAINING FAMILY MEMBER"/>
    <property type="match status" value="1"/>
</dbReference>
<dbReference type="PANTHER" id="PTHR11595:SF21">
    <property type="entry name" value="ELONGATION FACTOR 1-BETA"/>
    <property type="match status" value="1"/>
</dbReference>
<dbReference type="Pfam" id="PF10587">
    <property type="entry name" value="EF-1_beta_acid"/>
    <property type="match status" value="1"/>
</dbReference>
<dbReference type="Pfam" id="PF00736">
    <property type="entry name" value="EF1_GNE"/>
    <property type="match status" value="1"/>
</dbReference>
<dbReference type="SMART" id="SM00888">
    <property type="entry name" value="EF1_GNE"/>
    <property type="match status" value="1"/>
</dbReference>
<dbReference type="SUPFAM" id="SSF54984">
    <property type="entry name" value="eEF-1beta-like"/>
    <property type="match status" value="1"/>
</dbReference>
<dbReference type="SUPFAM" id="SSF47616">
    <property type="entry name" value="GST C-terminal domain-like"/>
    <property type="match status" value="1"/>
</dbReference>
<dbReference type="PROSITE" id="PS00825">
    <property type="entry name" value="EF1BD_2"/>
    <property type="match status" value="1"/>
</dbReference>
<proteinExistence type="evidence at protein level"/>
<organism>
    <name type="scientific">Dictyostelium discoideum</name>
    <name type="common">Social amoeba</name>
    <dbReference type="NCBI Taxonomy" id="44689"/>
    <lineage>
        <taxon>Eukaryota</taxon>
        <taxon>Amoebozoa</taxon>
        <taxon>Evosea</taxon>
        <taxon>Eumycetozoa</taxon>
        <taxon>Dictyostelia</taxon>
        <taxon>Dictyosteliales</taxon>
        <taxon>Dictyosteliaceae</taxon>
        <taxon>Dictyostelium</taxon>
    </lineage>
</organism>
<name>EF1B_DICDI</name>
<protein>
    <recommendedName>
        <fullName>Elongation factor 1-beta</fullName>
    </recommendedName>
    <alternativeName>
        <fullName>DdEF-1 beta</fullName>
    </alternativeName>
</protein>
<sequence>MPSFADLTTENGLVELNKFVSDKTYIVGFVPSSADVQAFNLVKTAPCATKYPHAARWFNTIASYSAAEQGQFEKVTETVTIAAPAAPKADDDVDLFGSDDEDDEEYERQLEERRKKAMEHKKPKETVIAKSSILLDVKPWDDETDMVELEKCVRSIEMDGLVWGASKLVAVGYGIKKLVINLVVEDLKVSTDELEEKIKDFEDYVQSVDVAAFNKI</sequence>
<accession>Q9GRF8</accession>
<accession>O60954</accession>
<accession>Q54Q62</accession>
<reference key="1">
    <citation type="journal article" date="1998" name="Biochim. Biophys. Acta">
        <title>Cloning and sequence analysis of the cDNA encoding the elongation factor-1 beta of Dictyostelium discoideum.</title>
        <authorList>
            <person name="Chae S.-C."/>
            <person name="Maeda Y."/>
        </authorList>
    </citation>
    <scope>NUCLEOTIDE SEQUENCE [MRNA]</scope>
    <scope>DEVELOPMENTAL STAGE</scope>
</reference>
<reference key="2">
    <citation type="journal article" date="2001" name="Biochim. Biophys. Acta">
        <title>Elongation factor 1beta is an actin-binding protein.</title>
        <authorList>
            <person name="Furukawa R."/>
            <person name="Jinks T.M."/>
            <person name="Tishgarten T."/>
            <person name="Mazzawi M."/>
            <person name="Morris D.R."/>
            <person name="Fechheimer M."/>
        </authorList>
    </citation>
    <scope>NUCLEOTIDE SEQUENCE [MRNA]</scope>
    <scope>SUBCELLULAR LOCATION</scope>
    <scope>INTERACTION WITH ACTIN</scope>
    <source>
        <strain>AX3</strain>
    </source>
</reference>
<reference key="3">
    <citation type="journal article" date="2005" name="Nature">
        <title>The genome of the social amoeba Dictyostelium discoideum.</title>
        <authorList>
            <person name="Eichinger L."/>
            <person name="Pachebat J.A."/>
            <person name="Gloeckner G."/>
            <person name="Rajandream M.A."/>
            <person name="Sucgang R."/>
            <person name="Berriman M."/>
            <person name="Song J."/>
            <person name="Olsen R."/>
            <person name="Szafranski K."/>
            <person name="Xu Q."/>
            <person name="Tunggal B."/>
            <person name="Kummerfeld S."/>
            <person name="Madera M."/>
            <person name="Konfortov B.A."/>
            <person name="Rivero F."/>
            <person name="Bankier A.T."/>
            <person name="Lehmann R."/>
            <person name="Hamlin N."/>
            <person name="Davies R."/>
            <person name="Gaudet P."/>
            <person name="Fey P."/>
            <person name="Pilcher K."/>
            <person name="Chen G."/>
            <person name="Saunders D."/>
            <person name="Sodergren E.J."/>
            <person name="Davis P."/>
            <person name="Kerhornou A."/>
            <person name="Nie X."/>
            <person name="Hall N."/>
            <person name="Anjard C."/>
            <person name="Hemphill L."/>
            <person name="Bason N."/>
            <person name="Farbrother P."/>
            <person name="Desany B."/>
            <person name="Just E."/>
            <person name="Morio T."/>
            <person name="Rost R."/>
            <person name="Churcher C.M."/>
            <person name="Cooper J."/>
            <person name="Haydock S."/>
            <person name="van Driessche N."/>
            <person name="Cronin A."/>
            <person name="Goodhead I."/>
            <person name="Muzny D.M."/>
            <person name="Mourier T."/>
            <person name="Pain A."/>
            <person name="Lu M."/>
            <person name="Harper D."/>
            <person name="Lindsay R."/>
            <person name="Hauser H."/>
            <person name="James K.D."/>
            <person name="Quiles M."/>
            <person name="Madan Babu M."/>
            <person name="Saito T."/>
            <person name="Buchrieser C."/>
            <person name="Wardroper A."/>
            <person name="Felder M."/>
            <person name="Thangavelu M."/>
            <person name="Johnson D."/>
            <person name="Knights A."/>
            <person name="Loulseged H."/>
            <person name="Mungall K.L."/>
            <person name="Oliver K."/>
            <person name="Price C."/>
            <person name="Quail M.A."/>
            <person name="Urushihara H."/>
            <person name="Hernandez J."/>
            <person name="Rabbinowitsch E."/>
            <person name="Steffen D."/>
            <person name="Sanders M."/>
            <person name="Ma J."/>
            <person name="Kohara Y."/>
            <person name="Sharp S."/>
            <person name="Simmonds M.N."/>
            <person name="Spiegler S."/>
            <person name="Tivey A."/>
            <person name="Sugano S."/>
            <person name="White B."/>
            <person name="Walker D."/>
            <person name="Woodward J.R."/>
            <person name="Winckler T."/>
            <person name="Tanaka Y."/>
            <person name="Shaulsky G."/>
            <person name="Schleicher M."/>
            <person name="Weinstock G.M."/>
            <person name="Rosenthal A."/>
            <person name="Cox E.C."/>
            <person name="Chisholm R.L."/>
            <person name="Gibbs R.A."/>
            <person name="Loomis W.F."/>
            <person name="Platzer M."/>
            <person name="Kay R.R."/>
            <person name="Williams J.G."/>
            <person name="Dear P.H."/>
            <person name="Noegel A.A."/>
            <person name="Barrell B.G."/>
            <person name="Kuspa A."/>
        </authorList>
    </citation>
    <scope>NUCLEOTIDE SEQUENCE [LARGE SCALE GENOMIC DNA]</scope>
    <source>
        <strain>AX4</strain>
    </source>
</reference>
<reference key="4">
    <citation type="submission" date="2007-07" db="UniProtKB">
        <authorList>
            <person name="Bienvenut W.V."/>
            <person name="Patel H."/>
            <person name="Brunton V.G."/>
            <person name="Frame M.C."/>
        </authorList>
    </citation>
    <scope>PROTEIN SEQUENCE OF 2-18; 75-88 AND 168-176</scope>
    <scope>CLEAVAGE OF INITIATOR METHIONINE</scope>
    <scope>IDENTIFICATION BY MASS SPECTROMETRY</scope>
</reference>
<reference key="5">
    <citation type="journal article" date="2006" name="Eur. J. Cell Biol.">
        <title>Identification and isolation of Dictyostelium microtubule-associated protein interactors by tandem affinity purification.</title>
        <authorList>
            <person name="Koch K.V."/>
            <person name="Reinders Y."/>
            <person name="Ho T.-H."/>
            <person name="Sickmann A."/>
            <person name="Graef R."/>
        </authorList>
    </citation>
    <scope>IDENTIFICATION BY MASS SPECTROMETRY [LARGE SCALE ANALYSIS]</scope>
    <source>
        <strain>AX2</strain>
    </source>
</reference>
<reference key="6">
    <citation type="journal article" date="2006" name="Mol. Cell. Proteomics">
        <title>Proteomics fingerprinting of phagosome maturation and evidence for the role of a Galpha during uptake.</title>
        <authorList>
            <person name="Gotthardt D."/>
            <person name="Blancheteau V."/>
            <person name="Bosserhoff A."/>
            <person name="Ruppert T."/>
            <person name="Delorenzi M."/>
            <person name="Soldati T."/>
        </authorList>
    </citation>
    <scope>IDENTIFICATION BY MASS SPECTROMETRY [LARGE SCALE ANALYSIS]</scope>
    <source>
        <strain>AX2</strain>
    </source>
</reference>
<comment type="function">
    <text evidence="1">EF-1-beta and EF-1-delta stimulate the exchange of GDP bound to EF-1-alpha to GTP.</text>
</comment>
<comment type="subunit">
    <text evidence="1 2">EF-1 is composed of 4 subunits: alpha, beta, delta, and gamma (By similarity). Interacts with actin.</text>
</comment>
<comment type="subcellular location">
    <subcellularLocation>
        <location evidence="2">Cytoplasm</location>
    </subcellularLocation>
    <text>Found in cortical and hyaline cytoplasm.</text>
</comment>
<comment type="developmental stage">
    <text evidence="3">Expressed during the vegetative growth phase, followed by marked decrease in response to cell differentiation induced by starvation.</text>
</comment>
<comment type="similarity">
    <text evidence="5">Belongs to the EF-1-beta/EF-1-delta family.</text>
</comment>
<comment type="sequence caution" evidence="5">
    <conflict type="frameshift">
        <sequence resource="EMBL-CDS" id="BAA25924"/>
    </conflict>
</comment>
<evidence type="ECO:0000250" key="1"/>
<evidence type="ECO:0000269" key="2">
    <source>
    </source>
</evidence>
<evidence type="ECO:0000269" key="3">
    <source>
    </source>
</evidence>
<evidence type="ECO:0000269" key="4">
    <source ref="4"/>
</evidence>
<evidence type="ECO:0000305" key="5"/>
<feature type="initiator methionine" description="Removed" evidence="4">
    <location>
        <position position="1"/>
    </location>
</feature>
<feature type="chain" id="PRO_0000326429" description="Elongation factor 1-beta">
    <location>
        <begin position="2"/>
        <end position="216"/>
    </location>
</feature>
<feature type="sequence conflict" description="In Ref. 1; BAA25924." evidence="5" ref="1">
    <original>PSF</original>
    <variation>LL</variation>
    <location>
        <begin position="2"/>
        <end position="4"/>
    </location>
</feature>
<feature type="sequence conflict" description="In Ref. 1; BAA25924." evidence="5" ref="1">
    <original>E</original>
    <variation>D</variation>
    <location>
        <position position="107"/>
    </location>
</feature>
<keyword id="KW-0963">Cytoplasm</keyword>
<keyword id="KW-0903">Direct protein sequencing</keyword>
<keyword id="KW-0251">Elongation factor</keyword>
<keyword id="KW-0648">Protein biosynthesis</keyword>
<keyword id="KW-1185">Reference proteome</keyword>
<gene>
    <name type="primary">efa1B</name>
    <name type="synonym">eEF1beta</name>
    <name type="ORF">DDB_G0284035</name>
</gene>